<proteinExistence type="inferred from homology"/>
<accession>A3CR17</accession>
<protein>
    <recommendedName>
        <fullName evidence="1">DNA mismatch repair protein MutS</fullName>
    </recommendedName>
</protein>
<name>MUTS_STRSV</name>
<feature type="chain" id="PRO_1000008112" description="DNA mismatch repair protein MutS">
    <location>
        <begin position="1"/>
        <end position="849"/>
    </location>
</feature>
<feature type="binding site" evidence="1">
    <location>
        <begin position="602"/>
        <end position="609"/>
    </location>
    <ligand>
        <name>ATP</name>
        <dbReference type="ChEBI" id="CHEBI:30616"/>
    </ligand>
</feature>
<evidence type="ECO:0000255" key="1">
    <source>
        <dbReference type="HAMAP-Rule" id="MF_00096"/>
    </source>
</evidence>
<dbReference type="EMBL" id="CP000387">
    <property type="protein sequence ID" value="ABN45622.1"/>
    <property type="molecule type" value="Genomic_DNA"/>
</dbReference>
<dbReference type="RefSeq" id="WP_011837653.1">
    <property type="nucleotide sequence ID" value="NC_009009.1"/>
</dbReference>
<dbReference type="RefSeq" id="YP_001036172.1">
    <property type="nucleotide sequence ID" value="NC_009009.1"/>
</dbReference>
<dbReference type="SMR" id="A3CR17"/>
<dbReference type="STRING" id="388919.SSA_2260"/>
<dbReference type="KEGG" id="ssa:SSA_2260"/>
<dbReference type="PATRIC" id="fig|388919.9.peg.2143"/>
<dbReference type="eggNOG" id="COG0249">
    <property type="taxonomic scope" value="Bacteria"/>
</dbReference>
<dbReference type="HOGENOM" id="CLU_002472_4_0_9"/>
<dbReference type="OrthoDB" id="9802448at2"/>
<dbReference type="Proteomes" id="UP000002148">
    <property type="component" value="Chromosome"/>
</dbReference>
<dbReference type="GO" id="GO:0005829">
    <property type="term" value="C:cytosol"/>
    <property type="evidence" value="ECO:0007669"/>
    <property type="project" value="TreeGrafter"/>
</dbReference>
<dbReference type="GO" id="GO:0005524">
    <property type="term" value="F:ATP binding"/>
    <property type="evidence" value="ECO:0007669"/>
    <property type="project" value="UniProtKB-UniRule"/>
</dbReference>
<dbReference type="GO" id="GO:0140664">
    <property type="term" value="F:ATP-dependent DNA damage sensor activity"/>
    <property type="evidence" value="ECO:0007669"/>
    <property type="project" value="InterPro"/>
</dbReference>
<dbReference type="GO" id="GO:0003684">
    <property type="term" value="F:damaged DNA binding"/>
    <property type="evidence" value="ECO:0007669"/>
    <property type="project" value="UniProtKB-UniRule"/>
</dbReference>
<dbReference type="GO" id="GO:0030983">
    <property type="term" value="F:mismatched DNA binding"/>
    <property type="evidence" value="ECO:0007669"/>
    <property type="project" value="InterPro"/>
</dbReference>
<dbReference type="GO" id="GO:0006298">
    <property type="term" value="P:mismatch repair"/>
    <property type="evidence" value="ECO:0007669"/>
    <property type="project" value="UniProtKB-UniRule"/>
</dbReference>
<dbReference type="CDD" id="cd03284">
    <property type="entry name" value="ABC_MutS1"/>
    <property type="match status" value="1"/>
</dbReference>
<dbReference type="FunFam" id="1.10.1420.10:FF:000001">
    <property type="entry name" value="DNA mismatch repair protein MutS"/>
    <property type="match status" value="1"/>
</dbReference>
<dbReference type="FunFam" id="3.40.1170.10:FF:000001">
    <property type="entry name" value="DNA mismatch repair protein MutS"/>
    <property type="match status" value="1"/>
</dbReference>
<dbReference type="FunFam" id="3.40.50.300:FF:000896">
    <property type="entry name" value="DNA mismatch repair protein MutS"/>
    <property type="match status" value="1"/>
</dbReference>
<dbReference type="Gene3D" id="1.10.1420.10">
    <property type="match status" value="2"/>
</dbReference>
<dbReference type="Gene3D" id="3.40.1170.10">
    <property type="entry name" value="DNA repair protein MutS, domain I"/>
    <property type="match status" value="1"/>
</dbReference>
<dbReference type="Gene3D" id="3.30.420.110">
    <property type="entry name" value="MutS, connector domain"/>
    <property type="match status" value="1"/>
</dbReference>
<dbReference type="Gene3D" id="3.40.50.300">
    <property type="entry name" value="P-loop containing nucleotide triphosphate hydrolases"/>
    <property type="match status" value="1"/>
</dbReference>
<dbReference type="HAMAP" id="MF_00096">
    <property type="entry name" value="MutS"/>
    <property type="match status" value="1"/>
</dbReference>
<dbReference type="InterPro" id="IPR005748">
    <property type="entry name" value="DNA_mismatch_repair_MutS"/>
</dbReference>
<dbReference type="InterPro" id="IPR007695">
    <property type="entry name" value="DNA_mismatch_repair_MutS-lik_N"/>
</dbReference>
<dbReference type="InterPro" id="IPR017261">
    <property type="entry name" value="DNA_mismatch_repair_MutS/MSH"/>
</dbReference>
<dbReference type="InterPro" id="IPR000432">
    <property type="entry name" value="DNA_mismatch_repair_MutS_C"/>
</dbReference>
<dbReference type="InterPro" id="IPR007861">
    <property type="entry name" value="DNA_mismatch_repair_MutS_clamp"/>
</dbReference>
<dbReference type="InterPro" id="IPR007696">
    <property type="entry name" value="DNA_mismatch_repair_MutS_core"/>
</dbReference>
<dbReference type="InterPro" id="IPR016151">
    <property type="entry name" value="DNA_mismatch_repair_MutS_N"/>
</dbReference>
<dbReference type="InterPro" id="IPR036187">
    <property type="entry name" value="DNA_mismatch_repair_MutS_sf"/>
</dbReference>
<dbReference type="InterPro" id="IPR007860">
    <property type="entry name" value="DNA_mmatch_repair_MutS_con_dom"/>
</dbReference>
<dbReference type="InterPro" id="IPR045076">
    <property type="entry name" value="MutS"/>
</dbReference>
<dbReference type="InterPro" id="IPR036678">
    <property type="entry name" value="MutS_con_dom_sf"/>
</dbReference>
<dbReference type="InterPro" id="IPR027417">
    <property type="entry name" value="P-loop_NTPase"/>
</dbReference>
<dbReference type="NCBIfam" id="TIGR01070">
    <property type="entry name" value="mutS1"/>
    <property type="match status" value="1"/>
</dbReference>
<dbReference type="NCBIfam" id="NF003810">
    <property type="entry name" value="PRK05399.1"/>
    <property type="match status" value="1"/>
</dbReference>
<dbReference type="PANTHER" id="PTHR11361:SF34">
    <property type="entry name" value="DNA MISMATCH REPAIR PROTEIN MSH1, MITOCHONDRIAL"/>
    <property type="match status" value="1"/>
</dbReference>
<dbReference type="PANTHER" id="PTHR11361">
    <property type="entry name" value="DNA MISMATCH REPAIR PROTEIN MUTS FAMILY MEMBER"/>
    <property type="match status" value="1"/>
</dbReference>
<dbReference type="Pfam" id="PF01624">
    <property type="entry name" value="MutS_I"/>
    <property type="match status" value="1"/>
</dbReference>
<dbReference type="Pfam" id="PF05188">
    <property type="entry name" value="MutS_II"/>
    <property type="match status" value="1"/>
</dbReference>
<dbReference type="Pfam" id="PF05192">
    <property type="entry name" value="MutS_III"/>
    <property type="match status" value="1"/>
</dbReference>
<dbReference type="Pfam" id="PF05190">
    <property type="entry name" value="MutS_IV"/>
    <property type="match status" value="1"/>
</dbReference>
<dbReference type="Pfam" id="PF00488">
    <property type="entry name" value="MutS_V"/>
    <property type="match status" value="1"/>
</dbReference>
<dbReference type="PIRSF" id="PIRSF037677">
    <property type="entry name" value="DNA_mis_repair_Msh6"/>
    <property type="match status" value="1"/>
</dbReference>
<dbReference type="SMART" id="SM00534">
    <property type="entry name" value="MUTSac"/>
    <property type="match status" value="1"/>
</dbReference>
<dbReference type="SMART" id="SM00533">
    <property type="entry name" value="MUTSd"/>
    <property type="match status" value="1"/>
</dbReference>
<dbReference type="SUPFAM" id="SSF55271">
    <property type="entry name" value="DNA repair protein MutS, domain I"/>
    <property type="match status" value="1"/>
</dbReference>
<dbReference type="SUPFAM" id="SSF53150">
    <property type="entry name" value="DNA repair protein MutS, domain II"/>
    <property type="match status" value="1"/>
</dbReference>
<dbReference type="SUPFAM" id="SSF48334">
    <property type="entry name" value="DNA repair protein MutS, domain III"/>
    <property type="match status" value="1"/>
</dbReference>
<dbReference type="SUPFAM" id="SSF52540">
    <property type="entry name" value="P-loop containing nucleoside triphosphate hydrolases"/>
    <property type="match status" value="1"/>
</dbReference>
<dbReference type="PROSITE" id="PS00486">
    <property type="entry name" value="DNA_MISMATCH_REPAIR_2"/>
    <property type="match status" value="1"/>
</dbReference>
<sequence length="849" mass="94741">MAVEKLSPGMQQYLDIKKDYPDAFLLFRMGDFYELFYDDAVNAAQILEISLTSRNKNAENPIPMAGVPYHSAQQYIDVLVESGYKVAIAEQMEDPKEAKGVVKREVVQVITPGTVVDSSKPDSANNFLVALDYSDGLYGLAYMDLVTGEFQVTSLEDFALVCGEIRNLKAREVVLGYALPEAEEQVLAGQMNLLLSYVQTALDDVQLLGEELSPMERQAAGKLLEYVHRTQMRELSHLKKAQHYEIKDFLQMDYATKASLDLTENARSGKKHGSLYWLMDETKTAMGGRMLRSWIQRPLIDEARISQRQNVVEVFLDHFFERSDLTESLKGVYDIERLASRVSFGKTNPKELLQLAATLGNVPQIKAILQGIGSPHLARLIEGLDPIPELAGLISSAISPDAPHIITEGNIIQTGFDETLDQYRLVLREGTGWIAELEVKERANSGISNLKIDYNKKDGYYFHVTNSQLAHVPSHFFRKATLKNSERFGTEELARIEGEMLEAREKSANLEYEIFMRIREEAGKYIQRLQALAQTLAAVDVLQSFAAVAEQQHLVRPVFTAERRLQIEKGRHAVVEKVMGAQSYIPNSILLDQETDIQLITGPNMSGKSTYMRQLAIIVIMAQMGSYVPAQSASLPLFDAIFTRIGAADDLVSGQSTFMVEMMEANRAIRQASERSLILFDELGRGTATYDGMALAQAIIEHIHHYTGAKTLFATHYHELTALEESLEHLENVHVATLEKDGQVTFLHKIEPGPADKSYGIHVAKIAGLPEKLLERADSILSHLESQDTGLGSELPTASRPKQSQVAEQMSLFAEGTENPVLTELRDLDIYNMTPLEVMAAVAELKKKL</sequence>
<gene>
    <name evidence="1" type="primary">mutS</name>
    <name type="ordered locus">SSA_2260</name>
</gene>
<reference key="1">
    <citation type="journal article" date="2007" name="J. Bacteriol.">
        <title>Genome of the opportunistic pathogen Streptococcus sanguinis.</title>
        <authorList>
            <person name="Xu P."/>
            <person name="Alves J.M."/>
            <person name="Kitten T."/>
            <person name="Brown A."/>
            <person name="Chen Z."/>
            <person name="Ozaki L.S."/>
            <person name="Manque P."/>
            <person name="Ge X."/>
            <person name="Serrano M.G."/>
            <person name="Puiu D."/>
            <person name="Hendricks S."/>
            <person name="Wang Y."/>
            <person name="Chaplin M.D."/>
            <person name="Akan D."/>
            <person name="Paik S."/>
            <person name="Peterson D.L."/>
            <person name="Macrina F.L."/>
            <person name="Buck G.A."/>
        </authorList>
    </citation>
    <scope>NUCLEOTIDE SEQUENCE [LARGE SCALE GENOMIC DNA]</scope>
    <source>
        <strain>SK36</strain>
    </source>
</reference>
<comment type="function">
    <text evidence="1">This protein is involved in the repair of mismatches in DNA. It is possible that it carries out the mismatch recognition step. This protein has a weak ATPase activity.</text>
</comment>
<comment type="similarity">
    <text evidence="1">Belongs to the DNA mismatch repair MutS family.</text>
</comment>
<keyword id="KW-0067">ATP-binding</keyword>
<keyword id="KW-0227">DNA damage</keyword>
<keyword id="KW-0234">DNA repair</keyword>
<keyword id="KW-0238">DNA-binding</keyword>
<keyword id="KW-0547">Nucleotide-binding</keyword>
<keyword id="KW-1185">Reference proteome</keyword>
<organism>
    <name type="scientific">Streptococcus sanguinis (strain SK36)</name>
    <dbReference type="NCBI Taxonomy" id="388919"/>
    <lineage>
        <taxon>Bacteria</taxon>
        <taxon>Bacillati</taxon>
        <taxon>Bacillota</taxon>
        <taxon>Bacilli</taxon>
        <taxon>Lactobacillales</taxon>
        <taxon>Streptococcaceae</taxon>
        <taxon>Streptococcus</taxon>
    </lineage>
</organism>